<protein>
    <recommendedName>
        <fullName evidence="7">Junctional cadherin 5-associated protein</fullName>
    </recommendedName>
    <alternativeName>
        <fullName>Junctional protein associated with coronary artery disease</fullName>
        <shortName>JCAD</shortName>
    </alternativeName>
</protein>
<sequence>MYSVEDLLISHGYKLSRDPPASREDNPKGRQAARTGTRAGQGLQNGHEDGPAALAHRKTSAGKGHVSDSESRRSTPRGHGEPQSTSASRTSEAGFCNQPPSAWSSHPPTGNDQAYRRRGRQEARSQKPREHENLEARGMAQAHSLPVHVREGPWEVGGRSEHVMKKPVWEEELRMSGPAKWQNVSLESWNQPRKLGRQMSDGDGERLFQDLYPFIQGEHVLNSQNKGKSRSLPRVLSPESLSCTEIPIPLNERHSPKMPPYPPTCAPNLDSTRNSEKSGCSAPFPRPKFGRPLKPPSYSSHQQSRGGADSSDSQDSQQMDAYVPRHELCLSDPGLEPPVYVPPPSYRSPPQNIPNPYLEDTVPINVCGGHSQQQSPTEKAGASGQPPSGPPGTGNEYGVSPRLPQGLPAHPRPVTAYDGFVQYIPFDDPRLRHFKLAQPQGFCEDIKLDDKSYNSSPVTAQEPAHGGMQPDGAIWNPQSLIPPSGDERGLVLADSSPRWLWGQPPGDGENSGLPNQRDRCVARGQWPDVRGSQHGHTGRQVSSPYSQGESTCETQTKLKKFQTGTRTKKSSKKKMNETIFCLVSIPVKSESHLPDRDMDNNDLKPSADQKNGSDKSPALQEQSLLSMSSTDLELQALTGSMGGRTEFQKQDLGEPEEDRQTNDLSFIHLTKHRELKHSGSWPGHRYRDQQTQTSFSEEPQSSQLLPGAKLGGPSRAALSPKCSDPAASEAQTHTAFPTGDHKQRPSARNLKGHRSLSPSSNSAFSRTSLSVDQAPTPKAGRSQPCVDVHGLGAHPGPKREVVKGEPTGPCNSKQLFGQFLLKPVSRRPWDLISQLESFNKELQEEEESSSSSSSSSSSSEESEAEPQQENRAHCRQEDVGFRGNSPEMRVEPQPRMWVPESPVCRSGRGESKSESWSEELQPGHPRAWPPSPGRFRVEEGGGAPFCSADGSTSAEKRHLEVSNGMDELAGSPFPVTRMSSRSSDAKPLPASYPAEPREPQESPKITSAFSSVKPSEAVPRKFDSGGERGAGLPLSLSNKNRGLSAPDLRSVGLTPGQEQGASELEGSLGEASTIEIPPGESLQARAARILGIEVAVESLLPGIRRAGQNQPAEPDASACTPESPQEELLSRPAPADVPRVSTDAFYGRRKCGWTKSPLFVGDRDSARRAPQAFEHSDVDGVVTSTDPVPEPEPSPLESKFFEQKDVETKPPFRSTLFHFVERTPSVAGSEKRLRSPSKVIESLQEKLASPPRRADPDRLMRMKEVSSVSRMRVLSFRNADSQEDAEELKATTRGQAGLPGGLVSPGSGDRAQRLGHSLSVSKDSISREEKEHPAAQKEKSMDQDFWCPDSYDPSRVERV</sequence>
<feature type="chain" id="PRO_0000314185" description="Junctional cadherin 5-associated protein">
    <location>
        <begin position="1"/>
        <end position="1359"/>
    </location>
</feature>
<feature type="region of interest" description="Disordered" evidence="2">
    <location>
        <begin position="1"/>
        <end position="147"/>
    </location>
</feature>
<feature type="region of interest" description="Disordered" evidence="2">
    <location>
        <begin position="249"/>
        <end position="411"/>
    </location>
</feature>
<feature type="region of interest" description="Disordered" evidence="2">
    <location>
        <begin position="454"/>
        <end position="554"/>
    </location>
</feature>
<feature type="region of interest" description="Disordered" evidence="2">
    <location>
        <begin position="591"/>
        <end position="813"/>
    </location>
</feature>
<feature type="region of interest" description="Disordered" evidence="2">
    <location>
        <begin position="840"/>
        <end position="1076"/>
    </location>
</feature>
<feature type="region of interest" description="Disordered" evidence="2">
    <location>
        <begin position="1105"/>
        <end position="1141"/>
    </location>
</feature>
<feature type="region of interest" description="Disordered" evidence="2">
    <location>
        <begin position="1157"/>
        <end position="1207"/>
    </location>
</feature>
<feature type="region of interest" description="Disordered" evidence="2">
    <location>
        <begin position="1225"/>
        <end position="1260"/>
    </location>
</feature>
<feature type="region of interest" description="Disordered" evidence="2">
    <location>
        <begin position="1276"/>
        <end position="1359"/>
    </location>
</feature>
<feature type="compositionally biased region" description="Basic and acidic residues" evidence="2">
    <location>
        <begin position="15"/>
        <end position="28"/>
    </location>
</feature>
<feature type="compositionally biased region" description="Polar residues" evidence="2">
    <location>
        <begin position="82"/>
        <end position="91"/>
    </location>
</feature>
<feature type="compositionally biased region" description="Polar residues" evidence="2">
    <location>
        <begin position="98"/>
        <end position="112"/>
    </location>
</feature>
<feature type="compositionally biased region" description="Basic and acidic residues" evidence="2">
    <location>
        <begin position="120"/>
        <end position="135"/>
    </location>
</feature>
<feature type="compositionally biased region" description="Low complexity" evidence="2">
    <location>
        <begin position="302"/>
        <end position="321"/>
    </location>
</feature>
<feature type="compositionally biased region" description="Pro residues" evidence="2">
    <location>
        <begin position="335"/>
        <end position="353"/>
    </location>
</feature>
<feature type="compositionally biased region" description="Polar residues" evidence="2">
    <location>
        <begin position="539"/>
        <end position="554"/>
    </location>
</feature>
<feature type="compositionally biased region" description="Basic and acidic residues" evidence="2">
    <location>
        <begin position="591"/>
        <end position="613"/>
    </location>
</feature>
<feature type="compositionally biased region" description="Polar residues" evidence="2">
    <location>
        <begin position="619"/>
        <end position="632"/>
    </location>
</feature>
<feature type="compositionally biased region" description="Polar residues" evidence="2">
    <location>
        <begin position="689"/>
        <end position="704"/>
    </location>
</feature>
<feature type="compositionally biased region" description="Polar residues" evidence="2">
    <location>
        <begin position="756"/>
        <end position="773"/>
    </location>
</feature>
<feature type="compositionally biased region" description="Low complexity" evidence="2">
    <location>
        <begin position="849"/>
        <end position="859"/>
    </location>
</feature>
<feature type="compositionally biased region" description="Basic and acidic residues" evidence="2">
    <location>
        <begin position="868"/>
        <end position="880"/>
    </location>
</feature>
<feature type="compositionally biased region" description="Polar residues" evidence="2">
    <location>
        <begin position="1003"/>
        <end position="1013"/>
    </location>
</feature>
<feature type="compositionally biased region" description="Basic and acidic residues" evidence="2">
    <location>
        <begin position="1324"/>
        <end position="1342"/>
    </location>
</feature>
<feature type="modified residue" description="Phosphoserine" evidence="9">
    <location>
        <position position="1044"/>
    </location>
</feature>
<feature type="modified residue" description="Phosphoserine" evidence="1">
    <location>
        <position position="1050"/>
    </location>
</feature>
<feature type="modified residue" description="Phosphoserine" evidence="9">
    <location>
        <position position="1194"/>
    </location>
</feature>
<feature type="modified residue" description="Phosphoserine" evidence="1">
    <location>
        <position position="1281"/>
    </location>
</feature>
<feature type="sequence variant" id="VAR_037867" description="In dbSNP:rs7917573.">
    <original>E</original>
    <variation>D</variation>
    <location>
        <position position="487"/>
    </location>
</feature>
<feature type="sequence variant" id="VAR_037868" description="In dbSNP:rs7917566.">
    <original>D</original>
    <variation>N</variation>
    <location>
        <position position="494"/>
    </location>
</feature>
<feature type="sequence variant" id="VAR_037869" description="In dbSNP:rs7901855.">
    <original>E</original>
    <variation>A</variation>
    <location>
        <position position="729"/>
    </location>
</feature>
<feature type="sequence variant" id="VAR_037870" description="In dbSNP:rs2185724." evidence="3 4 5">
    <original>R</original>
    <variation>G</variation>
    <location>
        <position position="957"/>
    </location>
</feature>
<feature type="sequence variant" id="VAR_037871" description="In dbSNP:rs3739998." evidence="5">
    <original>S</original>
    <variation>T</variation>
    <location>
        <position position="1002"/>
    </location>
</feature>
<feature type="sequence variant" id="VAR_037872" description="In dbSNP:rs12240677.">
    <original>A</original>
    <variation>G</variation>
    <location>
        <position position="1095"/>
    </location>
</feature>
<feature type="sequence conflict" description="In Ref. 5; CAI46027." evidence="7" ref="5">
    <original>K</original>
    <variation>R</variation>
    <location>
        <position position="813"/>
    </location>
</feature>
<feature type="sequence conflict" description="In Ref. 6; AAH47548." evidence="7" ref="6">
    <original>S</original>
    <variation>G</variation>
    <location>
        <position position="852"/>
    </location>
</feature>
<feature type="sequence conflict" description="In Ref. 6; AAH47548." evidence="7" ref="6">
    <original>Q</original>
    <variation>R</variation>
    <location>
        <position position="1083"/>
    </location>
</feature>
<feature type="sequence conflict" description="In Ref. 6; AAH47548." evidence="7" ref="6">
    <original>P</original>
    <variation>R</variation>
    <location>
        <position position="1348"/>
    </location>
</feature>
<accession>Q9P266</accession>
<accession>Q5HYA7</accession>
<accession>Q5T992</accession>
<accession>Q86WZ9</accession>
<accession>Q9BYJ2</accession>
<dbReference type="EMBL" id="AB040895">
    <property type="protein sequence ID" value="BAA95986.2"/>
    <property type="status" value="ALT_INIT"/>
    <property type="molecule type" value="mRNA"/>
</dbReference>
<dbReference type="EMBL" id="AL158036">
    <property type="status" value="NOT_ANNOTATED_CDS"/>
    <property type="molecule type" value="Genomic_DNA"/>
</dbReference>
<dbReference type="EMBL" id="CH471072">
    <property type="protein sequence ID" value="EAW86016.1"/>
    <property type="molecule type" value="Genomic_DNA"/>
</dbReference>
<dbReference type="EMBL" id="AL583916">
    <property type="protein sequence ID" value="CAC29500.1"/>
    <property type="molecule type" value="mRNA"/>
</dbReference>
<dbReference type="EMBL" id="BX648773">
    <property type="protein sequence ID" value="CAI46027.1"/>
    <property type="status" value="ALT_INIT"/>
    <property type="molecule type" value="mRNA"/>
</dbReference>
<dbReference type="EMBL" id="BC047548">
    <property type="protein sequence ID" value="AAH47548.1"/>
    <property type="molecule type" value="mRNA"/>
</dbReference>
<dbReference type="CCDS" id="CCDS41500.1"/>
<dbReference type="RefSeq" id="NP_001336951.1">
    <property type="nucleotide sequence ID" value="NM_001350022.2"/>
</dbReference>
<dbReference type="RefSeq" id="NP_065899.1">
    <property type="nucleotide sequence ID" value="NM_020848.4"/>
</dbReference>
<dbReference type="RefSeq" id="XP_011517910.1">
    <property type="nucleotide sequence ID" value="XM_011519608.1"/>
</dbReference>
<dbReference type="BioGRID" id="121655">
    <property type="interactions" value="37"/>
</dbReference>
<dbReference type="FunCoup" id="Q9P266">
    <property type="interactions" value="215"/>
</dbReference>
<dbReference type="IntAct" id="Q9P266">
    <property type="interactions" value="17"/>
</dbReference>
<dbReference type="MINT" id="Q9P266"/>
<dbReference type="STRING" id="9606.ENSP00000364526"/>
<dbReference type="GlyGen" id="Q9P266">
    <property type="glycosylation" value="1 site, 1 O-linked glycan (1 site)"/>
</dbReference>
<dbReference type="iPTMnet" id="Q9P266"/>
<dbReference type="PhosphoSitePlus" id="Q9P266"/>
<dbReference type="BioMuta" id="JCAD"/>
<dbReference type="DMDM" id="166218835"/>
<dbReference type="jPOST" id="Q9P266"/>
<dbReference type="MassIVE" id="Q9P266"/>
<dbReference type="PaxDb" id="9606-ENSP00000364526"/>
<dbReference type="PeptideAtlas" id="Q9P266"/>
<dbReference type="ProteomicsDB" id="83737"/>
<dbReference type="Pumba" id="Q9P266"/>
<dbReference type="Antibodypedia" id="2803">
    <property type="antibodies" value="20 antibodies from 10 providers"/>
</dbReference>
<dbReference type="DNASU" id="57608"/>
<dbReference type="Ensembl" id="ENST00000375377.2">
    <property type="protein sequence ID" value="ENSP00000364526.1"/>
    <property type="gene ID" value="ENSG00000165757.9"/>
</dbReference>
<dbReference type="GeneID" id="57608"/>
<dbReference type="KEGG" id="hsa:57608"/>
<dbReference type="MANE-Select" id="ENST00000375377.2">
    <property type="protein sequence ID" value="ENSP00000364526.1"/>
    <property type="RefSeq nucleotide sequence ID" value="NM_020848.4"/>
    <property type="RefSeq protein sequence ID" value="NP_065899.1"/>
</dbReference>
<dbReference type="UCSC" id="uc001iux.4">
    <property type="organism name" value="human"/>
</dbReference>
<dbReference type="AGR" id="HGNC:29283"/>
<dbReference type="CTD" id="57608"/>
<dbReference type="DisGeNET" id="57608"/>
<dbReference type="GeneCards" id="JCAD"/>
<dbReference type="HGNC" id="HGNC:29283">
    <property type="gene designation" value="JCAD"/>
</dbReference>
<dbReference type="HPA" id="ENSG00000165757">
    <property type="expression patterns" value="Low tissue specificity"/>
</dbReference>
<dbReference type="MIM" id="614398">
    <property type="type" value="gene"/>
</dbReference>
<dbReference type="neXtProt" id="NX_Q9P266"/>
<dbReference type="OpenTargets" id="ENSG00000165757"/>
<dbReference type="PharmGKB" id="PA134955526"/>
<dbReference type="VEuPathDB" id="HostDB:ENSG00000165757"/>
<dbReference type="eggNOG" id="ENOG502QURJ">
    <property type="taxonomic scope" value="Eukaryota"/>
</dbReference>
<dbReference type="GeneTree" id="ENSGT00390000015348"/>
<dbReference type="HOGENOM" id="CLU_005347_0_0_1"/>
<dbReference type="InParanoid" id="Q9P266"/>
<dbReference type="OMA" id="DERGCRQ"/>
<dbReference type="OrthoDB" id="8669630at2759"/>
<dbReference type="PAN-GO" id="Q9P266">
    <property type="GO annotations" value="3 GO annotations based on evolutionary models"/>
</dbReference>
<dbReference type="PhylomeDB" id="Q9P266"/>
<dbReference type="TreeFam" id="TF335913"/>
<dbReference type="PathwayCommons" id="Q9P266"/>
<dbReference type="SignaLink" id="Q9P266"/>
<dbReference type="BioGRID-ORCS" id="57608">
    <property type="hits" value="11 hits in 1147 CRISPR screens"/>
</dbReference>
<dbReference type="ChiTaRS" id="KIAA1462">
    <property type="organism name" value="human"/>
</dbReference>
<dbReference type="GenomeRNAi" id="57608"/>
<dbReference type="Pharos" id="Q9P266">
    <property type="development level" value="Tbio"/>
</dbReference>
<dbReference type="PRO" id="PR:Q9P266"/>
<dbReference type="Proteomes" id="UP000005640">
    <property type="component" value="Chromosome 10"/>
</dbReference>
<dbReference type="RNAct" id="Q9P266">
    <property type="molecule type" value="protein"/>
</dbReference>
<dbReference type="Bgee" id="ENSG00000165757">
    <property type="expression patterns" value="Expressed in saphenous vein and 194 other cell types or tissues"/>
</dbReference>
<dbReference type="GO" id="GO:0005912">
    <property type="term" value="C:adherens junction"/>
    <property type="evidence" value="ECO:0000314"/>
    <property type="project" value="BHF-UCL"/>
</dbReference>
<dbReference type="GO" id="GO:0048471">
    <property type="term" value="C:perinuclear region of cytoplasm"/>
    <property type="evidence" value="ECO:0000314"/>
    <property type="project" value="BHF-UCL"/>
</dbReference>
<dbReference type="GO" id="GO:0032587">
    <property type="term" value="C:ruffle membrane"/>
    <property type="evidence" value="ECO:0000314"/>
    <property type="project" value="BHF-UCL"/>
</dbReference>
<dbReference type="GO" id="GO:0007155">
    <property type="term" value="P:cell adhesion"/>
    <property type="evidence" value="ECO:0007669"/>
    <property type="project" value="UniProtKB-KW"/>
</dbReference>
<dbReference type="GO" id="GO:1903589">
    <property type="term" value="P:positive regulation of blood vessel endothelial cell proliferation involved in sprouting angiogenesis"/>
    <property type="evidence" value="ECO:0000315"/>
    <property type="project" value="BHF-UCL"/>
</dbReference>
<dbReference type="GO" id="GO:0090050">
    <property type="term" value="P:positive regulation of cell migration involved in sprouting angiogenesis"/>
    <property type="evidence" value="ECO:0000315"/>
    <property type="project" value="BHF-UCL"/>
</dbReference>
<dbReference type="GO" id="GO:0043410">
    <property type="term" value="P:positive regulation of MAPK cascade"/>
    <property type="evidence" value="ECO:0000315"/>
    <property type="project" value="BHF-UCL"/>
</dbReference>
<dbReference type="GO" id="GO:1903672">
    <property type="term" value="P:positive regulation of sprouting angiogenesis"/>
    <property type="evidence" value="ECO:0007669"/>
    <property type="project" value="Ensembl"/>
</dbReference>
<dbReference type="GO" id="GO:1900748">
    <property type="term" value="P:positive regulation of vascular endothelial growth factor signaling pathway"/>
    <property type="evidence" value="ECO:0000315"/>
    <property type="project" value="BHF-UCL"/>
</dbReference>
<dbReference type="InterPro" id="IPR028221">
    <property type="entry name" value="JCAD"/>
</dbReference>
<dbReference type="PANTHER" id="PTHR34757:SF1">
    <property type="entry name" value="JUNCTIONAL CADHERIN 5-ASSOCIATED PROTEIN"/>
    <property type="match status" value="1"/>
</dbReference>
<dbReference type="PANTHER" id="PTHR34757">
    <property type="entry name" value="JUNCTIONAL PROTEIN ASSOCIATED WITH CORONARY ARTERY DISEASE"/>
    <property type="match status" value="1"/>
</dbReference>
<dbReference type="Pfam" id="PF15351">
    <property type="entry name" value="JCAD"/>
    <property type="match status" value="1"/>
</dbReference>
<gene>
    <name evidence="8" type="primary">JCAD</name>
    <name evidence="6" type="synonym">KIAA1462</name>
</gene>
<proteinExistence type="evidence at protein level"/>
<organism>
    <name type="scientific">Homo sapiens</name>
    <name type="common">Human</name>
    <dbReference type="NCBI Taxonomy" id="9606"/>
    <lineage>
        <taxon>Eukaryota</taxon>
        <taxon>Metazoa</taxon>
        <taxon>Chordata</taxon>
        <taxon>Craniata</taxon>
        <taxon>Vertebrata</taxon>
        <taxon>Euteleostomi</taxon>
        <taxon>Mammalia</taxon>
        <taxon>Eutheria</taxon>
        <taxon>Euarchontoglires</taxon>
        <taxon>Primates</taxon>
        <taxon>Haplorrhini</taxon>
        <taxon>Catarrhini</taxon>
        <taxon>Hominidae</taxon>
        <taxon>Homo</taxon>
    </lineage>
</organism>
<reference key="1">
    <citation type="journal article" date="2000" name="DNA Res.">
        <title>Prediction of the coding sequences of unidentified human genes. XVII. The complete sequences of 100 new cDNA clones from brain which code for large proteins in vitro.</title>
        <authorList>
            <person name="Nagase T."/>
            <person name="Kikuno R."/>
            <person name="Ishikawa K."/>
            <person name="Hirosawa M."/>
            <person name="Ohara O."/>
        </authorList>
    </citation>
    <scope>NUCLEOTIDE SEQUENCE [LARGE SCALE MRNA]</scope>
    <scope>VARIANT GLY-957</scope>
    <source>
        <tissue>Brain</tissue>
    </source>
</reference>
<reference key="2">
    <citation type="journal article" date="2002" name="DNA Res.">
        <title>Construction of expression-ready cDNA clones for KIAA genes: manual curation of 330 KIAA cDNA clones.</title>
        <authorList>
            <person name="Nakajima D."/>
            <person name="Okazaki N."/>
            <person name="Yamakawa H."/>
            <person name="Kikuno R."/>
            <person name="Ohara O."/>
            <person name="Nagase T."/>
        </authorList>
    </citation>
    <scope>SEQUENCE REVISION</scope>
</reference>
<reference key="3">
    <citation type="journal article" date="2004" name="Nature">
        <title>The DNA sequence and comparative analysis of human chromosome 10.</title>
        <authorList>
            <person name="Deloukas P."/>
            <person name="Earthrowl M.E."/>
            <person name="Grafham D.V."/>
            <person name="Rubenfield M."/>
            <person name="French L."/>
            <person name="Steward C.A."/>
            <person name="Sims S.K."/>
            <person name="Jones M.C."/>
            <person name="Searle S."/>
            <person name="Scott C."/>
            <person name="Howe K."/>
            <person name="Hunt S.E."/>
            <person name="Andrews T.D."/>
            <person name="Gilbert J.G.R."/>
            <person name="Swarbreck D."/>
            <person name="Ashurst J.L."/>
            <person name="Taylor A."/>
            <person name="Battles J."/>
            <person name="Bird C.P."/>
            <person name="Ainscough R."/>
            <person name="Almeida J.P."/>
            <person name="Ashwell R.I.S."/>
            <person name="Ambrose K.D."/>
            <person name="Babbage A.K."/>
            <person name="Bagguley C.L."/>
            <person name="Bailey J."/>
            <person name="Banerjee R."/>
            <person name="Bates K."/>
            <person name="Beasley H."/>
            <person name="Bray-Allen S."/>
            <person name="Brown A.J."/>
            <person name="Brown J.Y."/>
            <person name="Burford D.C."/>
            <person name="Burrill W."/>
            <person name="Burton J."/>
            <person name="Cahill P."/>
            <person name="Camire D."/>
            <person name="Carter N.P."/>
            <person name="Chapman J.C."/>
            <person name="Clark S.Y."/>
            <person name="Clarke G."/>
            <person name="Clee C.M."/>
            <person name="Clegg S."/>
            <person name="Corby N."/>
            <person name="Coulson A."/>
            <person name="Dhami P."/>
            <person name="Dutta I."/>
            <person name="Dunn M."/>
            <person name="Faulkner L."/>
            <person name="Frankish A."/>
            <person name="Frankland J.A."/>
            <person name="Garner P."/>
            <person name="Garnett J."/>
            <person name="Gribble S."/>
            <person name="Griffiths C."/>
            <person name="Grocock R."/>
            <person name="Gustafson E."/>
            <person name="Hammond S."/>
            <person name="Harley J.L."/>
            <person name="Hart E."/>
            <person name="Heath P.D."/>
            <person name="Ho T.P."/>
            <person name="Hopkins B."/>
            <person name="Horne J."/>
            <person name="Howden P.J."/>
            <person name="Huckle E."/>
            <person name="Hynds C."/>
            <person name="Johnson C."/>
            <person name="Johnson D."/>
            <person name="Kana A."/>
            <person name="Kay M."/>
            <person name="Kimberley A.M."/>
            <person name="Kershaw J.K."/>
            <person name="Kokkinaki M."/>
            <person name="Laird G.K."/>
            <person name="Lawlor S."/>
            <person name="Lee H.M."/>
            <person name="Leongamornlert D.A."/>
            <person name="Laird G."/>
            <person name="Lloyd C."/>
            <person name="Lloyd D.M."/>
            <person name="Loveland J."/>
            <person name="Lovell J."/>
            <person name="McLaren S."/>
            <person name="McLay K.E."/>
            <person name="McMurray A."/>
            <person name="Mashreghi-Mohammadi M."/>
            <person name="Matthews L."/>
            <person name="Milne S."/>
            <person name="Nickerson T."/>
            <person name="Nguyen M."/>
            <person name="Overton-Larty E."/>
            <person name="Palmer S.A."/>
            <person name="Pearce A.V."/>
            <person name="Peck A.I."/>
            <person name="Pelan S."/>
            <person name="Phillimore B."/>
            <person name="Porter K."/>
            <person name="Rice C.M."/>
            <person name="Rogosin A."/>
            <person name="Ross M.T."/>
            <person name="Sarafidou T."/>
            <person name="Sehra H.K."/>
            <person name="Shownkeen R."/>
            <person name="Skuce C.D."/>
            <person name="Smith M."/>
            <person name="Standring L."/>
            <person name="Sycamore N."/>
            <person name="Tester J."/>
            <person name="Thorpe A."/>
            <person name="Torcasso W."/>
            <person name="Tracey A."/>
            <person name="Tromans A."/>
            <person name="Tsolas J."/>
            <person name="Wall M."/>
            <person name="Walsh J."/>
            <person name="Wang H."/>
            <person name="Weinstock K."/>
            <person name="West A.P."/>
            <person name="Willey D.L."/>
            <person name="Whitehead S.L."/>
            <person name="Wilming L."/>
            <person name="Wray P.W."/>
            <person name="Young L."/>
            <person name="Chen Y."/>
            <person name="Lovering R.C."/>
            <person name="Moschonas N.K."/>
            <person name="Siebert R."/>
            <person name="Fechtel K."/>
            <person name="Bentley D."/>
            <person name="Durbin R.M."/>
            <person name="Hubbard T."/>
            <person name="Doucette-Stamm L."/>
            <person name="Beck S."/>
            <person name="Smith D.R."/>
            <person name="Rogers J."/>
        </authorList>
    </citation>
    <scope>NUCLEOTIDE SEQUENCE [LARGE SCALE GENOMIC DNA]</scope>
</reference>
<reference key="4">
    <citation type="submission" date="2005-09" db="EMBL/GenBank/DDBJ databases">
        <authorList>
            <person name="Mural R.J."/>
            <person name="Istrail S."/>
            <person name="Sutton G.G."/>
            <person name="Florea L."/>
            <person name="Halpern A.L."/>
            <person name="Mobarry C.M."/>
            <person name="Lippert R."/>
            <person name="Walenz B."/>
            <person name="Shatkay H."/>
            <person name="Dew I."/>
            <person name="Miller J.R."/>
            <person name="Flanigan M.J."/>
            <person name="Edwards N.J."/>
            <person name="Bolanos R."/>
            <person name="Fasulo D."/>
            <person name="Halldorsson B.V."/>
            <person name="Hannenhalli S."/>
            <person name="Turner R."/>
            <person name="Yooseph S."/>
            <person name="Lu F."/>
            <person name="Nusskern D.R."/>
            <person name="Shue B.C."/>
            <person name="Zheng X.H."/>
            <person name="Zhong F."/>
            <person name="Delcher A.L."/>
            <person name="Huson D.H."/>
            <person name="Kravitz S.A."/>
            <person name="Mouchard L."/>
            <person name="Reinert K."/>
            <person name="Remington K.A."/>
            <person name="Clark A.G."/>
            <person name="Waterman M.S."/>
            <person name="Eichler E.E."/>
            <person name="Adams M.D."/>
            <person name="Hunkapiller M.W."/>
            <person name="Myers E.W."/>
            <person name="Venter J.C."/>
        </authorList>
    </citation>
    <scope>NUCLEOTIDE SEQUENCE [LARGE SCALE GENOMIC DNA]</scope>
</reference>
<reference key="5">
    <citation type="journal article" date="2007" name="BMC Genomics">
        <title>The full-ORF clone resource of the German cDNA consortium.</title>
        <authorList>
            <person name="Bechtel S."/>
            <person name="Rosenfelder H."/>
            <person name="Duda A."/>
            <person name="Schmidt C.P."/>
            <person name="Ernst U."/>
            <person name="Wellenreuther R."/>
            <person name="Mehrle A."/>
            <person name="Schuster C."/>
            <person name="Bahr A."/>
            <person name="Bloecker H."/>
            <person name="Heubner D."/>
            <person name="Hoerlein A."/>
            <person name="Michel G."/>
            <person name="Wedler H."/>
            <person name="Koehrer K."/>
            <person name="Ottenwaelder B."/>
            <person name="Poustka A."/>
            <person name="Wiemann S."/>
            <person name="Schupp I."/>
        </authorList>
    </citation>
    <scope>NUCLEOTIDE SEQUENCE [LARGE SCALE MRNA] OF 272-1359</scope>
    <scope>VARIANTS GLY-957 AND THR-1002</scope>
    <source>
        <tissue>Lymph node</tissue>
        <tissue>Uterus</tissue>
    </source>
</reference>
<reference key="6">
    <citation type="journal article" date="2004" name="Genome Res.">
        <title>The status, quality, and expansion of the NIH full-length cDNA project: the Mammalian Gene Collection (MGC).</title>
        <authorList>
            <consortium name="The MGC Project Team"/>
        </authorList>
    </citation>
    <scope>NUCLEOTIDE SEQUENCE [LARGE SCALE MRNA] OF 851-1359</scope>
    <scope>VARIANT GLY-957</scope>
    <source>
        <tissue>Brain</tissue>
    </source>
</reference>
<reference key="7">
    <citation type="journal article" date="2009" name="Anal. Chem.">
        <title>Lys-N and trypsin cover complementary parts of the phosphoproteome in a refined SCX-based approach.</title>
        <authorList>
            <person name="Gauci S."/>
            <person name="Helbig A.O."/>
            <person name="Slijper M."/>
            <person name="Krijgsveld J."/>
            <person name="Heck A.J."/>
            <person name="Mohammed S."/>
        </authorList>
    </citation>
    <scope>IDENTIFICATION BY MASS SPECTROMETRY [LARGE SCALE ANALYSIS]</scope>
</reference>
<reference key="8">
    <citation type="journal article" date="2014" name="J. Proteomics">
        <title>An enzyme assisted RP-RPLC approach for in-depth analysis of human liver phosphoproteome.</title>
        <authorList>
            <person name="Bian Y."/>
            <person name="Song C."/>
            <person name="Cheng K."/>
            <person name="Dong M."/>
            <person name="Wang F."/>
            <person name="Huang J."/>
            <person name="Sun D."/>
            <person name="Wang L."/>
            <person name="Ye M."/>
            <person name="Zou H."/>
        </authorList>
    </citation>
    <scope>PHOSPHORYLATION [LARGE SCALE ANALYSIS] AT SER-1044 AND SER-1194</scope>
    <scope>IDENTIFICATION BY MASS SPECTROMETRY [LARGE SCALE ANALYSIS]</scope>
    <source>
        <tissue>Liver</tissue>
    </source>
</reference>
<keyword id="KW-0130">Cell adhesion</keyword>
<keyword id="KW-0965">Cell junction</keyword>
<keyword id="KW-0597">Phosphoprotein</keyword>
<keyword id="KW-1267">Proteomics identification</keyword>
<keyword id="KW-1185">Reference proteome</keyword>
<evidence type="ECO:0000250" key="1">
    <source>
        <dbReference type="UniProtKB" id="Q5DTX6"/>
    </source>
</evidence>
<evidence type="ECO:0000256" key="2">
    <source>
        <dbReference type="SAM" id="MobiDB-lite"/>
    </source>
</evidence>
<evidence type="ECO:0000269" key="3">
    <source>
    </source>
</evidence>
<evidence type="ECO:0000269" key="4">
    <source>
    </source>
</evidence>
<evidence type="ECO:0000269" key="5">
    <source>
    </source>
</evidence>
<evidence type="ECO:0000303" key="6">
    <source>
    </source>
</evidence>
<evidence type="ECO:0000305" key="7"/>
<evidence type="ECO:0000312" key="8">
    <source>
        <dbReference type="HGNC" id="HGNC:29283"/>
    </source>
</evidence>
<evidence type="ECO:0007744" key="9">
    <source>
    </source>
</evidence>
<comment type="subcellular location">
    <subcellularLocation>
        <location evidence="1">Cell junction</location>
        <location evidence="1">Adherens junction</location>
    </subcellularLocation>
    <text evidence="1">Colocalizes with CDH5/VE-Cadherin in endothelial cells but not in epithelial cells.</text>
</comment>
<comment type="sequence caution" evidence="7">
    <conflict type="erroneous initiation">
        <sequence resource="EMBL-CDS" id="BAA95986"/>
    </conflict>
</comment>
<comment type="sequence caution" evidence="7">
    <conflict type="erroneous initiation">
        <sequence resource="EMBL-CDS" id="CAI46027"/>
    </conflict>
</comment>
<name>JCAD_HUMAN</name>